<gene>
    <name evidence="1" type="primary">rps10</name>
    <name type="ordered locus">Tneu_1817</name>
</gene>
<reference key="1">
    <citation type="submission" date="2008-03" db="EMBL/GenBank/DDBJ databases">
        <title>Complete sequence of Thermoproteus neutrophilus V24Sta.</title>
        <authorList>
            <consortium name="US DOE Joint Genome Institute"/>
            <person name="Copeland A."/>
            <person name="Lucas S."/>
            <person name="Lapidus A."/>
            <person name="Glavina del Rio T."/>
            <person name="Dalin E."/>
            <person name="Tice H."/>
            <person name="Bruce D."/>
            <person name="Goodwin L."/>
            <person name="Pitluck S."/>
            <person name="Sims D."/>
            <person name="Brettin T."/>
            <person name="Detter J.C."/>
            <person name="Han C."/>
            <person name="Kuske C.R."/>
            <person name="Schmutz J."/>
            <person name="Larimer F."/>
            <person name="Land M."/>
            <person name="Hauser L."/>
            <person name="Kyrpides N."/>
            <person name="Mikhailova N."/>
            <person name="Biddle J.F."/>
            <person name="Zhang Z."/>
            <person name="Fitz-Gibbon S.T."/>
            <person name="Lowe T.M."/>
            <person name="Saltikov C."/>
            <person name="House C.H."/>
            <person name="Richardson P."/>
        </authorList>
    </citation>
    <scope>NUCLEOTIDE SEQUENCE [LARGE SCALE GENOMIC DNA]</scope>
    <source>
        <strain>DSM 2338 / JCM 9278 / NBRC 100436 / V24Sta</strain>
    </source>
</reference>
<evidence type="ECO:0000255" key="1">
    <source>
        <dbReference type="HAMAP-Rule" id="MF_00508"/>
    </source>
</evidence>
<evidence type="ECO:0000305" key="2"/>
<dbReference type="EMBL" id="CP001014">
    <property type="protein sequence ID" value="ACB40734.1"/>
    <property type="molecule type" value="Genomic_DNA"/>
</dbReference>
<dbReference type="RefSeq" id="WP_012351153.1">
    <property type="nucleotide sequence ID" value="NC_010525.1"/>
</dbReference>
<dbReference type="SMR" id="B1YB34"/>
<dbReference type="STRING" id="444157.Tneu_1817"/>
<dbReference type="GeneID" id="6164645"/>
<dbReference type="KEGG" id="tne:Tneu_1817"/>
<dbReference type="eggNOG" id="arCOG01758">
    <property type="taxonomic scope" value="Archaea"/>
</dbReference>
<dbReference type="HOGENOM" id="CLU_122625_0_1_2"/>
<dbReference type="OrthoDB" id="371736at2157"/>
<dbReference type="Proteomes" id="UP000001694">
    <property type="component" value="Chromosome"/>
</dbReference>
<dbReference type="GO" id="GO:0015935">
    <property type="term" value="C:small ribosomal subunit"/>
    <property type="evidence" value="ECO:0007669"/>
    <property type="project" value="InterPro"/>
</dbReference>
<dbReference type="GO" id="GO:0003735">
    <property type="term" value="F:structural constituent of ribosome"/>
    <property type="evidence" value="ECO:0007669"/>
    <property type="project" value="InterPro"/>
</dbReference>
<dbReference type="GO" id="GO:0000049">
    <property type="term" value="F:tRNA binding"/>
    <property type="evidence" value="ECO:0007669"/>
    <property type="project" value="UniProtKB-UniRule"/>
</dbReference>
<dbReference type="GO" id="GO:0006412">
    <property type="term" value="P:translation"/>
    <property type="evidence" value="ECO:0007669"/>
    <property type="project" value="UniProtKB-UniRule"/>
</dbReference>
<dbReference type="FunFam" id="3.30.70.600:FF:000004">
    <property type="entry name" value="30S ribosomal protein S10"/>
    <property type="match status" value="1"/>
</dbReference>
<dbReference type="Gene3D" id="3.30.70.600">
    <property type="entry name" value="Ribosomal protein S10 domain"/>
    <property type="match status" value="1"/>
</dbReference>
<dbReference type="HAMAP" id="MF_00508">
    <property type="entry name" value="Ribosomal_uS10"/>
    <property type="match status" value="1"/>
</dbReference>
<dbReference type="InterPro" id="IPR001848">
    <property type="entry name" value="Ribosomal_uS10"/>
</dbReference>
<dbReference type="InterPro" id="IPR018268">
    <property type="entry name" value="Ribosomal_uS10_CS"/>
</dbReference>
<dbReference type="InterPro" id="IPR027486">
    <property type="entry name" value="Ribosomal_uS10_dom"/>
</dbReference>
<dbReference type="InterPro" id="IPR036838">
    <property type="entry name" value="Ribosomal_uS10_dom_sf"/>
</dbReference>
<dbReference type="InterPro" id="IPR005729">
    <property type="entry name" value="Ribosomal_uS10_euk/arc"/>
</dbReference>
<dbReference type="NCBIfam" id="TIGR01046">
    <property type="entry name" value="uS10_euk_arch"/>
    <property type="match status" value="1"/>
</dbReference>
<dbReference type="PANTHER" id="PTHR11700">
    <property type="entry name" value="30S RIBOSOMAL PROTEIN S10 FAMILY MEMBER"/>
    <property type="match status" value="1"/>
</dbReference>
<dbReference type="Pfam" id="PF00338">
    <property type="entry name" value="Ribosomal_S10"/>
    <property type="match status" value="1"/>
</dbReference>
<dbReference type="PRINTS" id="PR00971">
    <property type="entry name" value="RIBOSOMALS10"/>
</dbReference>
<dbReference type="SMART" id="SM01403">
    <property type="entry name" value="Ribosomal_S10"/>
    <property type="match status" value="1"/>
</dbReference>
<dbReference type="SUPFAM" id="SSF54999">
    <property type="entry name" value="Ribosomal protein S10"/>
    <property type="match status" value="1"/>
</dbReference>
<dbReference type="PROSITE" id="PS00361">
    <property type="entry name" value="RIBOSOMAL_S10"/>
    <property type="match status" value="1"/>
</dbReference>
<name>RS10_PYRNV</name>
<keyword id="KW-0687">Ribonucleoprotein</keyword>
<keyword id="KW-0689">Ribosomal protein</keyword>
<sequence length="106" mass="12318">MSLASRRKVRIRLYGTNPTDVDQVAREIVDLAKKMGVQVRGPIPLPTRRLMVTVRRAPSGQGYHTFDHWEMRISKRLIDIEASERVLRRLMTIRVPDTVKIELQLI</sequence>
<organism>
    <name type="scientific">Pyrobaculum neutrophilum (strain DSM 2338 / JCM 9278 / NBRC 100436 / V24Sta)</name>
    <name type="common">Thermoproteus neutrophilus</name>
    <dbReference type="NCBI Taxonomy" id="444157"/>
    <lineage>
        <taxon>Archaea</taxon>
        <taxon>Thermoproteota</taxon>
        <taxon>Thermoprotei</taxon>
        <taxon>Thermoproteales</taxon>
        <taxon>Thermoproteaceae</taxon>
        <taxon>Pyrobaculum</taxon>
    </lineage>
</organism>
<proteinExistence type="inferred from homology"/>
<comment type="function">
    <text evidence="1">Involved in the binding of tRNA to the ribosomes.</text>
</comment>
<comment type="subunit">
    <text evidence="1">Part of the 30S ribosomal subunit.</text>
</comment>
<comment type="similarity">
    <text evidence="1">Belongs to the universal ribosomal protein uS10 family.</text>
</comment>
<protein>
    <recommendedName>
        <fullName evidence="1">Small ribosomal subunit protein uS10</fullName>
    </recommendedName>
    <alternativeName>
        <fullName evidence="2">30S ribosomal protein S10</fullName>
    </alternativeName>
</protein>
<accession>B1YB34</accession>
<feature type="chain" id="PRO_1000127195" description="Small ribosomal subunit protein uS10">
    <location>
        <begin position="1"/>
        <end position="106"/>
    </location>
</feature>